<proteinExistence type="inferred from homology"/>
<gene>
    <name evidence="1" type="primary">atpH</name>
    <name type="ordered locus">RMA_1255</name>
</gene>
<sequence>MNKGNLIENYAVALFNNAMVDNIQDKIFEEITSINRIITDNFDIREFLFSPIVNKNDKINAVNLLAKNIKISTIVQNFLLLLVKNSRTASLSNIVDAYNTLLYESKNIKIVQVISANKLQPKEQEWIKSLIEKELNQKTEILFDIDSTIIGGIVIKYDSMLQDYSIKGSLEKITKALKTVNVAA</sequence>
<name>ATPD_RICM5</name>
<dbReference type="EMBL" id="CP000683">
    <property type="protein sequence ID" value="ABV85229.1"/>
    <property type="status" value="ALT_INIT"/>
    <property type="molecule type" value="Genomic_DNA"/>
</dbReference>
<dbReference type="RefSeq" id="WP_041404884.1">
    <property type="nucleotide sequence ID" value="NC_009900.1"/>
</dbReference>
<dbReference type="SMR" id="A8F2U3"/>
<dbReference type="KEGG" id="rms:RMA_1255"/>
<dbReference type="HOGENOM" id="CLU_085114_1_1_5"/>
<dbReference type="Proteomes" id="UP000001311">
    <property type="component" value="Chromosome"/>
</dbReference>
<dbReference type="GO" id="GO:0005886">
    <property type="term" value="C:plasma membrane"/>
    <property type="evidence" value="ECO:0007669"/>
    <property type="project" value="UniProtKB-SubCell"/>
</dbReference>
<dbReference type="GO" id="GO:0045259">
    <property type="term" value="C:proton-transporting ATP synthase complex"/>
    <property type="evidence" value="ECO:0007669"/>
    <property type="project" value="UniProtKB-KW"/>
</dbReference>
<dbReference type="GO" id="GO:0046933">
    <property type="term" value="F:proton-transporting ATP synthase activity, rotational mechanism"/>
    <property type="evidence" value="ECO:0007669"/>
    <property type="project" value="UniProtKB-UniRule"/>
</dbReference>
<dbReference type="Gene3D" id="1.10.520.20">
    <property type="entry name" value="N-terminal domain of the delta subunit of the F1F0-ATP synthase"/>
    <property type="match status" value="1"/>
</dbReference>
<dbReference type="HAMAP" id="MF_01416">
    <property type="entry name" value="ATP_synth_delta_bact"/>
    <property type="match status" value="1"/>
</dbReference>
<dbReference type="InterPro" id="IPR026015">
    <property type="entry name" value="ATP_synth_OSCP/delta_N_sf"/>
</dbReference>
<dbReference type="InterPro" id="IPR000711">
    <property type="entry name" value="ATPase_OSCP/dsu"/>
</dbReference>
<dbReference type="NCBIfam" id="TIGR01145">
    <property type="entry name" value="ATP_synt_delta"/>
    <property type="match status" value="1"/>
</dbReference>
<dbReference type="PANTHER" id="PTHR11910">
    <property type="entry name" value="ATP SYNTHASE DELTA CHAIN"/>
    <property type="match status" value="1"/>
</dbReference>
<dbReference type="Pfam" id="PF00213">
    <property type="entry name" value="OSCP"/>
    <property type="match status" value="1"/>
</dbReference>
<dbReference type="PRINTS" id="PR00125">
    <property type="entry name" value="ATPASEDELTA"/>
</dbReference>
<dbReference type="SUPFAM" id="SSF47928">
    <property type="entry name" value="N-terminal domain of the delta subunit of the F1F0-ATP synthase"/>
    <property type="match status" value="1"/>
</dbReference>
<feature type="chain" id="PRO_0000371102" description="ATP synthase subunit delta">
    <location>
        <begin position="1"/>
        <end position="184"/>
    </location>
</feature>
<reference key="1">
    <citation type="journal article" date="2007" name="Genome Res.">
        <title>Lateral gene transfer between obligate intracellular bacteria: evidence from the Rickettsia massiliae genome.</title>
        <authorList>
            <person name="Blanc G."/>
            <person name="Ogata H."/>
            <person name="Robert C."/>
            <person name="Audic S."/>
            <person name="Claverie J.-M."/>
            <person name="Raoult D."/>
        </authorList>
    </citation>
    <scope>NUCLEOTIDE SEQUENCE [LARGE SCALE GENOMIC DNA]</scope>
    <source>
        <strain>Mtu5</strain>
    </source>
</reference>
<protein>
    <recommendedName>
        <fullName evidence="1">ATP synthase subunit delta</fullName>
    </recommendedName>
    <alternativeName>
        <fullName evidence="1">ATP synthase F(1) sector subunit delta</fullName>
    </alternativeName>
    <alternativeName>
        <fullName evidence="1">F-type ATPase subunit delta</fullName>
        <shortName evidence="1">F-ATPase subunit delta</shortName>
    </alternativeName>
</protein>
<evidence type="ECO:0000255" key="1">
    <source>
        <dbReference type="HAMAP-Rule" id="MF_01416"/>
    </source>
</evidence>
<evidence type="ECO:0000305" key="2"/>
<accession>A8F2U3</accession>
<keyword id="KW-0066">ATP synthesis</keyword>
<keyword id="KW-0997">Cell inner membrane</keyword>
<keyword id="KW-1003">Cell membrane</keyword>
<keyword id="KW-0139">CF(1)</keyword>
<keyword id="KW-0375">Hydrogen ion transport</keyword>
<keyword id="KW-0406">Ion transport</keyword>
<keyword id="KW-0472">Membrane</keyword>
<keyword id="KW-0813">Transport</keyword>
<organism>
    <name type="scientific">Rickettsia massiliae (strain Mtu5)</name>
    <dbReference type="NCBI Taxonomy" id="416276"/>
    <lineage>
        <taxon>Bacteria</taxon>
        <taxon>Pseudomonadati</taxon>
        <taxon>Pseudomonadota</taxon>
        <taxon>Alphaproteobacteria</taxon>
        <taxon>Rickettsiales</taxon>
        <taxon>Rickettsiaceae</taxon>
        <taxon>Rickettsieae</taxon>
        <taxon>Rickettsia</taxon>
        <taxon>spotted fever group</taxon>
    </lineage>
</organism>
<comment type="function">
    <text evidence="1">F(1)F(0) ATP synthase produces ATP from ADP in the presence of a proton or sodium gradient. F-type ATPases consist of two structural domains, F(1) containing the extramembraneous catalytic core and F(0) containing the membrane proton channel, linked together by a central stalk and a peripheral stalk. During catalysis, ATP synthesis in the catalytic domain of F(1) is coupled via a rotary mechanism of the central stalk subunits to proton translocation.</text>
</comment>
<comment type="function">
    <text evidence="1">This protein is part of the stalk that links CF(0) to CF(1). It either transmits conformational changes from CF(0) to CF(1) or is implicated in proton conduction.</text>
</comment>
<comment type="subunit">
    <text evidence="1">F-type ATPases have 2 components, F(1) - the catalytic core - and F(0) - the membrane proton channel. F(1) has five subunits: alpha(3), beta(3), gamma(1), delta(1), epsilon(1). F(0) has three main subunits: a(1), b(2) and c(10-14). The alpha and beta chains form an alternating ring which encloses part of the gamma chain. F(1) is attached to F(0) by a central stalk formed by the gamma and epsilon chains, while a peripheral stalk is formed by the delta and b chains.</text>
</comment>
<comment type="subcellular location">
    <subcellularLocation>
        <location evidence="1">Cell inner membrane</location>
        <topology evidence="1">Peripheral membrane protein</topology>
    </subcellularLocation>
</comment>
<comment type="similarity">
    <text evidence="1">Belongs to the ATPase delta chain family.</text>
</comment>
<comment type="sequence caution" evidence="2">
    <conflict type="erroneous initiation">
        <sequence resource="EMBL-CDS" id="ABV85229"/>
    </conflict>
</comment>